<dbReference type="EC" id="2.7.1.71" evidence="1"/>
<dbReference type="EMBL" id="AE009442">
    <property type="protein sequence ID" value="AAO28455.1"/>
    <property type="molecule type" value="Genomic_DNA"/>
</dbReference>
<dbReference type="RefSeq" id="WP_004090625.1">
    <property type="nucleotide sequence ID" value="NC_004556.1"/>
</dbReference>
<dbReference type="SMR" id="Q87DU8"/>
<dbReference type="KEGG" id="xft:PD_0582"/>
<dbReference type="HOGENOM" id="CLU_057607_3_2_6"/>
<dbReference type="UniPathway" id="UPA00053">
    <property type="reaction ID" value="UER00088"/>
</dbReference>
<dbReference type="Proteomes" id="UP000002516">
    <property type="component" value="Chromosome"/>
</dbReference>
<dbReference type="GO" id="GO:0005829">
    <property type="term" value="C:cytosol"/>
    <property type="evidence" value="ECO:0007669"/>
    <property type="project" value="TreeGrafter"/>
</dbReference>
<dbReference type="GO" id="GO:0005524">
    <property type="term" value="F:ATP binding"/>
    <property type="evidence" value="ECO:0007669"/>
    <property type="project" value="UniProtKB-UniRule"/>
</dbReference>
<dbReference type="GO" id="GO:0000287">
    <property type="term" value="F:magnesium ion binding"/>
    <property type="evidence" value="ECO:0007669"/>
    <property type="project" value="UniProtKB-UniRule"/>
</dbReference>
<dbReference type="GO" id="GO:0004765">
    <property type="term" value="F:shikimate kinase activity"/>
    <property type="evidence" value="ECO:0007669"/>
    <property type="project" value="UniProtKB-UniRule"/>
</dbReference>
<dbReference type="GO" id="GO:0008652">
    <property type="term" value="P:amino acid biosynthetic process"/>
    <property type="evidence" value="ECO:0007669"/>
    <property type="project" value="UniProtKB-KW"/>
</dbReference>
<dbReference type="GO" id="GO:0009073">
    <property type="term" value="P:aromatic amino acid family biosynthetic process"/>
    <property type="evidence" value="ECO:0007669"/>
    <property type="project" value="UniProtKB-KW"/>
</dbReference>
<dbReference type="GO" id="GO:0009423">
    <property type="term" value="P:chorismate biosynthetic process"/>
    <property type="evidence" value="ECO:0007669"/>
    <property type="project" value="UniProtKB-UniRule"/>
</dbReference>
<dbReference type="CDD" id="cd00464">
    <property type="entry name" value="SK"/>
    <property type="match status" value="1"/>
</dbReference>
<dbReference type="Gene3D" id="3.40.50.300">
    <property type="entry name" value="P-loop containing nucleotide triphosphate hydrolases"/>
    <property type="match status" value="1"/>
</dbReference>
<dbReference type="HAMAP" id="MF_00109">
    <property type="entry name" value="Shikimate_kinase"/>
    <property type="match status" value="1"/>
</dbReference>
<dbReference type="InterPro" id="IPR027417">
    <property type="entry name" value="P-loop_NTPase"/>
</dbReference>
<dbReference type="InterPro" id="IPR031322">
    <property type="entry name" value="Shikimate/glucono_kinase"/>
</dbReference>
<dbReference type="InterPro" id="IPR000623">
    <property type="entry name" value="Shikimate_kinase/TSH1"/>
</dbReference>
<dbReference type="InterPro" id="IPR023000">
    <property type="entry name" value="Shikimate_kinase_CS"/>
</dbReference>
<dbReference type="PANTHER" id="PTHR21087">
    <property type="entry name" value="SHIKIMATE KINASE"/>
    <property type="match status" value="1"/>
</dbReference>
<dbReference type="PANTHER" id="PTHR21087:SF16">
    <property type="entry name" value="SHIKIMATE KINASE 1, CHLOROPLASTIC"/>
    <property type="match status" value="1"/>
</dbReference>
<dbReference type="Pfam" id="PF01202">
    <property type="entry name" value="SKI"/>
    <property type="match status" value="1"/>
</dbReference>
<dbReference type="PRINTS" id="PR01100">
    <property type="entry name" value="SHIKIMTKNASE"/>
</dbReference>
<dbReference type="SUPFAM" id="SSF52540">
    <property type="entry name" value="P-loop containing nucleoside triphosphate hydrolases"/>
    <property type="match status" value="1"/>
</dbReference>
<dbReference type="PROSITE" id="PS01128">
    <property type="entry name" value="SHIKIMATE_KINASE"/>
    <property type="match status" value="1"/>
</dbReference>
<reference key="1">
    <citation type="journal article" date="2003" name="J. Bacteriol.">
        <title>Comparative analyses of the complete genome sequences of Pierce's disease and citrus variegated chlorosis strains of Xylella fastidiosa.</title>
        <authorList>
            <person name="Van Sluys M.A."/>
            <person name="de Oliveira M.C."/>
            <person name="Monteiro-Vitorello C.B."/>
            <person name="Miyaki C.Y."/>
            <person name="Furlan L.R."/>
            <person name="Camargo L.E.A."/>
            <person name="da Silva A.C.R."/>
            <person name="Moon D.H."/>
            <person name="Takita M.A."/>
            <person name="Lemos E.G.M."/>
            <person name="Machado M.A."/>
            <person name="Ferro M.I.T."/>
            <person name="da Silva F.R."/>
            <person name="Goldman M.H.S."/>
            <person name="Goldman G.H."/>
            <person name="Lemos M.V.F."/>
            <person name="El-Dorry H."/>
            <person name="Tsai S.M."/>
            <person name="Carrer H."/>
            <person name="Carraro D.M."/>
            <person name="de Oliveira R.C."/>
            <person name="Nunes L.R."/>
            <person name="Siqueira W.J."/>
            <person name="Coutinho L.L."/>
            <person name="Kimura E.T."/>
            <person name="Ferro E.S."/>
            <person name="Harakava R."/>
            <person name="Kuramae E.E."/>
            <person name="Marino C.L."/>
            <person name="Giglioti E."/>
            <person name="Abreu I.L."/>
            <person name="Alves L.M.C."/>
            <person name="do Amaral A.M."/>
            <person name="Baia G.S."/>
            <person name="Blanco S.R."/>
            <person name="Brito M.S."/>
            <person name="Cannavan F.S."/>
            <person name="Celestino A.V."/>
            <person name="da Cunha A.F."/>
            <person name="Fenille R.C."/>
            <person name="Ferro J.A."/>
            <person name="Formighieri E.F."/>
            <person name="Kishi L.T."/>
            <person name="Leoni S.G."/>
            <person name="Oliveira A.R."/>
            <person name="Rosa V.E. Jr."/>
            <person name="Sassaki F.T."/>
            <person name="Sena J.A.D."/>
            <person name="de Souza A.A."/>
            <person name="Truffi D."/>
            <person name="Tsukumo F."/>
            <person name="Yanai G.M."/>
            <person name="Zaros L.G."/>
            <person name="Civerolo E.L."/>
            <person name="Simpson A.J.G."/>
            <person name="Almeida N.F. Jr."/>
            <person name="Setubal J.C."/>
            <person name="Kitajima J.P."/>
        </authorList>
    </citation>
    <scope>NUCLEOTIDE SEQUENCE [LARGE SCALE GENOMIC DNA]</scope>
    <source>
        <strain>Temecula1 / ATCC 700964</strain>
    </source>
</reference>
<evidence type="ECO:0000255" key="1">
    <source>
        <dbReference type="HAMAP-Rule" id="MF_00109"/>
    </source>
</evidence>
<proteinExistence type="inferred from homology"/>
<feature type="chain" id="PRO_0000192427" description="Shikimate kinase">
    <location>
        <begin position="1"/>
        <end position="180"/>
    </location>
</feature>
<feature type="binding site" evidence="1">
    <location>
        <begin position="14"/>
        <end position="19"/>
    </location>
    <ligand>
        <name>ATP</name>
        <dbReference type="ChEBI" id="CHEBI:30616"/>
    </ligand>
</feature>
<feature type="binding site" evidence="1">
    <location>
        <position position="18"/>
    </location>
    <ligand>
        <name>Mg(2+)</name>
        <dbReference type="ChEBI" id="CHEBI:18420"/>
    </ligand>
</feature>
<feature type="binding site" evidence="1">
    <location>
        <position position="36"/>
    </location>
    <ligand>
        <name>substrate</name>
    </ligand>
</feature>
<feature type="binding site" evidence="1">
    <location>
        <position position="60"/>
    </location>
    <ligand>
        <name>substrate</name>
    </ligand>
</feature>
<feature type="binding site" evidence="1">
    <location>
        <position position="82"/>
    </location>
    <ligand>
        <name>substrate</name>
    </ligand>
</feature>
<feature type="binding site" evidence="1">
    <location>
        <position position="120"/>
    </location>
    <ligand>
        <name>ATP</name>
        <dbReference type="ChEBI" id="CHEBI:30616"/>
    </ligand>
</feature>
<feature type="binding site" evidence="1">
    <location>
        <position position="139"/>
    </location>
    <ligand>
        <name>substrate</name>
    </ligand>
</feature>
<name>AROK_XYLFT</name>
<comment type="function">
    <text evidence="1">Catalyzes the specific phosphorylation of the 3-hydroxyl group of shikimic acid using ATP as a cosubstrate.</text>
</comment>
<comment type="catalytic activity">
    <reaction evidence="1">
        <text>shikimate + ATP = 3-phosphoshikimate + ADP + H(+)</text>
        <dbReference type="Rhea" id="RHEA:13121"/>
        <dbReference type="ChEBI" id="CHEBI:15378"/>
        <dbReference type="ChEBI" id="CHEBI:30616"/>
        <dbReference type="ChEBI" id="CHEBI:36208"/>
        <dbReference type="ChEBI" id="CHEBI:145989"/>
        <dbReference type="ChEBI" id="CHEBI:456216"/>
        <dbReference type="EC" id="2.7.1.71"/>
    </reaction>
</comment>
<comment type="cofactor">
    <cofactor evidence="1">
        <name>Mg(2+)</name>
        <dbReference type="ChEBI" id="CHEBI:18420"/>
    </cofactor>
    <text evidence="1">Binds 1 Mg(2+) ion per subunit.</text>
</comment>
<comment type="pathway">
    <text evidence="1">Metabolic intermediate biosynthesis; chorismate biosynthesis; chorismate from D-erythrose 4-phosphate and phosphoenolpyruvate: step 5/7.</text>
</comment>
<comment type="subunit">
    <text evidence="1">Monomer.</text>
</comment>
<comment type="subcellular location">
    <subcellularLocation>
        <location evidence="1">Cytoplasm</location>
    </subcellularLocation>
</comment>
<comment type="similarity">
    <text evidence="1">Belongs to the shikimate kinase family.</text>
</comment>
<organism>
    <name type="scientific">Xylella fastidiosa (strain Temecula1 / ATCC 700964)</name>
    <dbReference type="NCBI Taxonomy" id="183190"/>
    <lineage>
        <taxon>Bacteria</taxon>
        <taxon>Pseudomonadati</taxon>
        <taxon>Pseudomonadota</taxon>
        <taxon>Gammaproteobacteria</taxon>
        <taxon>Lysobacterales</taxon>
        <taxon>Lysobacteraceae</taxon>
        <taxon>Xylella</taxon>
    </lineage>
</organism>
<gene>
    <name evidence="1" type="primary">aroK</name>
    <name type="ordered locus">PD_0582</name>
</gene>
<keyword id="KW-0028">Amino-acid biosynthesis</keyword>
<keyword id="KW-0057">Aromatic amino acid biosynthesis</keyword>
<keyword id="KW-0067">ATP-binding</keyword>
<keyword id="KW-0963">Cytoplasm</keyword>
<keyword id="KW-0418">Kinase</keyword>
<keyword id="KW-0460">Magnesium</keyword>
<keyword id="KW-0479">Metal-binding</keyword>
<keyword id="KW-0547">Nucleotide-binding</keyword>
<keyword id="KW-1185">Reference proteome</keyword>
<keyword id="KW-0808">Transferase</keyword>
<protein>
    <recommendedName>
        <fullName evidence="1">Shikimate kinase</fullName>
        <shortName evidence="1">SK</shortName>
        <ecNumber evidence="1">2.7.1.71</ecNumber>
    </recommendedName>
</protein>
<accession>Q87DU8</accession>
<sequence>MNPAPNLVMIGPMGAGKSSIGRRIAKHFNLHFADTDHAIVERAGTSISTIFKYSGEPEFRRLEREVLYDLLNHENRLIATGGGTILDPENRHRMQKRGFVVFLKINVNTQLERLAHDRYRPLLQQIDRKQVLSDLYATRQPLYQKIADMIVTTDHMSPNTATAQLILDLTAHWQKSSNTA</sequence>